<proteinExistence type="inferred from homology"/>
<gene>
    <name evidence="1" type="primary">ruvA</name>
    <name type="ordered locus">Glov_1248</name>
</gene>
<keyword id="KW-0963">Cytoplasm</keyword>
<keyword id="KW-0227">DNA damage</keyword>
<keyword id="KW-0233">DNA recombination</keyword>
<keyword id="KW-0234">DNA repair</keyword>
<keyword id="KW-0238">DNA-binding</keyword>
<keyword id="KW-1185">Reference proteome</keyword>
<protein>
    <recommendedName>
        <fullName evidence="1">Holliday junction branch migration complex subunit RuvA</fullName>
    </recommendedName>
</protein>
<comment type="function">
    <text evidence="1">The RuvA-RuvB-RuvC complex processes Holliday junction (HJ) DNA during genetic recombination and DNA repair, while the RuvA-RuvB complex plays an important role in the rescue of blocked DNA replication forks via replication fork reversal (RFR). RuvA specifically binds to HJ cruciform DNA, conferring on it an open structure. The RuvB hexamer acts as an ATP-dependent pump, pulling dsDNA into and through the RuvAB complex. HJ branch migration allows RuvC to scan DNA until it finds its consensus sequence, where it cleaves and resolves the cruciform DNA.</text>
</comment>
<comment type="subunit">
    <text evidence="1">Homotetramer. Forms an RuvA(8)-RuvB(12)-Holliday junction (HJ) complex. HJ DNA is sandwiched between 2 RuvA tetramers; dsDNA enters through RuvA and exits via RuvB. An RuvB hexamer assembles on each DNA strand where it exits the tetramer. Each RuvB hexamer is contacted by two RuvA subunits (via domain III) on 2 adjacent RuvB subunits; this complex drives branch migration. In the full resolvosome a probable DNA-RuvA(4)-RuvB(12)-RuvC(2) complex forms which resolves the HJ.</text>
</comment>
<comment type="subcellular location">
    <subcellularLocation>
        <location evidence="1">Cytoplasm</location>
    </subcellularLocation>
</comment>
<comment type="domain">
    <text evidence="1">Has three domains with a flexible linker between the domains II and III and assumes an 'L' shape. Domain III is highly mobile and contacts RuvB.</text>
</comment>
<comment type="similarity">
    <text evidence="1">Belongs to the RuvA family.</text>
</comment>
<sequence>MIALLTGQIAHKSPDHVILDVHGVGYRVMIPFSTYYELPEEGQATLHIHTSVREDAILLYGFRTRTEKSFFQLLISVSGIGPKLARDILSNIQPPQLAAALQQGDLHKLSAIPGIGKKTAERLVLELKDKAGKLDSGSIPAGDAVGRSLPAGSVLDDVSSALVNLGYKDPQVRKVLAELDCAGSASVEEVLKQALKILMK</sequence>
<name>RUVA_TRIL1</name>
<reference key="1">
    <citation type="submission" date="2008-05" db="EMBL/GenBank/DDBJ databases">
        <title>Complete sequence of chromosome of Geobacter lovleyi SZ.</title>
        <authorList>
            <consortium name="US DOE Joint Genome Institute"/>
            <person name="Lucas S."/>
            <person name="Copeland A."/>
            <person name="Lapidus A."/>
            <person name="Glavina del Rio T."/>
            <person name="Dalin E."/>
            <person name="Tice H."/>
            <person name="Bruce D."/>
            <person name="Goodwin L."/>
            <person name="Pitluck S."/>
            <person name="Chertkov O."/>
            <person name="Meincke L."/>
            <person name="Brettin T."/>
            <person name="Detter J.C."/>
            <person name="Han C."/>
            <person name="Tapia R."/>
            <person name="Kuske C.R."/>
            <person name="Schmutz J."/>
            <person name="Larimer F."/>
            <person name="Land M."/>
            <person name="Hauser L."/>
            <person name="Kyrpides N."/>
            <person name="Mikhailova N."/>
            <person name="Sung Y."/>
            <person name="Fletcher K.E."/>
            <person name="Ritalahti K.M."/>
            <person name="Loeffler F.E."/>
            <person name="Richardson P."/>
        </authorList>
    </citation>
    <scope>NUCLEOTIDE SEQUENCE [LARGE SCALE GENOMIC DNA]</scope>
    <source>
        <strain>ATCC BAA-1151 / DSM 17278 / SZ</strain>
    </source>
</reference>
<evidence type="ECO:0000255" key="1">
    <source>
        <dbReference type="HAMAP-Rule" id="MF_00031"/>
    </source>
</evidence>
<accession>B3E790</accession>
<feature type="chain" id="PRO_1000090321" description="Holliday junction branch migration complex subunit RuvA">
    <location>
        <begin position="1"/>
        <end position="200"/>
    </location>
</feature>
<feature type="region of interest" description="Domain I" evidence="1">
    <location>
        <begin position="1"/>
        <end position="63"/>
    </location>
</feature>
<feature type="region of interest" description="Domain II" evidence="1">
    <location>
        <begin position="64"/>
        <end position="142"/>
    </location>
</feature>
<feature type="region of interest" description="Flexible linker" evidence="1">
    <location>
        <begin position="143"/>
        <end position="153"/>
    </location>
</feature>
<feature type="region of interest" description="Domain III" evidence="1">
    <location>
        <begin position="153"/>
        <end position="200"/>
    </location>
</feature>
<dbReference type="EMBL" id="CP001089">
    <property type="protein sequence ID" value="ACD94970.1"/>
    <property type="molecule type" value="Genomic_DNA"/>
</dbReference>
<dbReference type="RefSeq" id="WP_012469318.1">
    <property type="nucleotide sequence ID" value="NC_010814.1"/>
</dbReference>
<dbReference type="SMR" id="B3E790"/>
<dbReference type="STRING" id="398767.Glov_1248"/>
<dbReference type="KEGG" id="glo:Glov_1248"/>
<dbReference type="eggNOG" id="COG0632">
    <property type="taxonomic scope" value="Bacteria"/>
</dbReference>
<dbReference type="HOGENOM" id="CLU_087936_3_0_7"/>
<dbReference type="OrthoDB" id="5293449at2"/>
<dbReference type="Proteomes" id="UP000002420">
    <property type="component" value="Chromosome"/>
</dbReference>
<dbReference type="GO" id="GO:0005737">
    <property type="term" value="C:cytoplasm"/>
    <property type="evidence" value="ECO:0007669"/>
    <property type="project" value="UniProtKB-SubCell"/>
</dbReference>
<dbReference type="GO" id="GO:0009379">
    <property type="term" value="C:Holliday junction helicase complex"/>
    <property type="evidence" value="ECO:0007669"/>
    <property type="project" value="InterPro"/>
</dbReference>
<dbReference type="GO" id="GO:0048476">
    <property type="term" value="C:Holliday junction resolvase complex"/>
    <property type="evidence" value="ECO:0007669"/>
    <property type="project" value="UniProtKB-UniRule"/>
</dbReference>
<dbReference type="GO" id="GO:0005524">
    <property type="term" value="F:ATP binding"/>
    <property type="evidence" value="ECO:0007669"/>
    <property type="project" value="InterPro"/>
</dbReference>
<dbReference type="GO" id="GO:0000400">
    <property type="term" value="F:four-way junction DNA binding"/>
    <property type="evidence" value="ECO:0007669"/>
    <property type="project" value="UniProtKB-UniRule"/>
</dbReference>
<dbReference type="GO" id="GO:0009378">
    <property type="term" value="F:four-way junction helicase activity"/>
    <property type="evidence" value="ECO:0007669"/>
    <property type="project" value="InterPro"/>
</dbReference>
<dbReference type="GO" id="GO:0006310">
    <property type="term" value="P:DNA recombination"/>
    <property type="evidence" value="ECO:0007669"/>
    <property type="project" value="UniProtKB-UniRule"/>
</dbReference>
<dbReference type="GO" id="GO:0006281">
    <property type="term" value="P:DNA repair"/>
    <property type="evidence" value="ECO:0007669"/>
    <property type="project" value="UniProtKB-UniRule"/>
</dbReference>
<dbReference type="CDD" id="cd14332">
    <property type="entry name" value="UBA_RuvA_C"/>
    <property type="match status" value="1"/>
</dbReference>
<dbReference type="Gene3D" id="1.10.150.20">
    <property type="entry name" value="5' to 3' exonuclease, C-terminal subdomain"/>
    <property type="match status" value="1"/>
</dbReference>
<dbReference type="Gene3D" id="1.10.8.10">
    <property type="entry name" value="DNA helicase RuvA subunit, C-terminal domain"/>
    <property type="match status" value="1"/>
</dbReference>
<dbReference type="Gene3D" id="2.40.50.140">
    <property type="entry name" value="Nucleic acid-binding proteins"/>
    <property type="match status" value="1"/>
</dbReference>
<dbReference type="HAMAP" id="MF_00031">
    <property type="entry name" value="DNA_HJ_migration_RuvA"/>
    <property type="match status" value="1"/>
</dbReference>
<dbReference type="InterPro" id="IPR013849">
    <property type="entry name" value="DNA_helicase_Holl-junc_RuvA_I"/>
</dbReference>
<dbReference type="InterPro" id="IPR003583">
    <property type="entry name" value="Hlx-hairpin-Hlx_DNA-bd_motif"/>
</dbReference>
<dbReference type="InterPro" id="IPR012340">
    <property type="entry name" value="NA-bd_OB-fold"/>
</dbReference>
<dbReference type="InterPro" id="IPR000085">
    <property type="entry name" value="RuvA"/>
</dbReference>
<dbReference type="InterPro" id="IPR010994">
    <property type="entry name" value="RuvA_2-like"/>
</dbReference>
<dbReference type="InterPro" id="IPR011114">
    <property type="entry name" value="RuvA_C"/>
</dbReference>
<dbReference type="InterPro" id="IPR036267">
    <property type="entry name" value="RuvA_C_sf"/>
</dbReference>
<dbReference type="NCBIfam" id="TIGR00084">
    <property type="entry name" value="ruvA"/>
    <property type="match status" value="1"/>
</dbReference>
<dbReference type="Pfam" id="PF14520">
    <property type="entry name" value="HHH_5"/>
    <property type="match status" value="1"/>
</dbReference>
<dbReference type="Pfam" id="PF07499">
    <property type="entry name" value="RuvA_C"/>
    <property type="match status" value="1"/>
</dbReference>
<dbReference type="Pfam" id="PF01330">
    <property type="entry name" value="RuvA_N"/>
    <property type="match status" value="1"/>
</dbReference>
<dbReference type="SMART" id="SM00278">
    <property type="entry name" value="HhH1"/>
    <property type="match status" value="2"/>
</dbReference>
<dbReference type="SUPFAM" id="SSF46929">
    <property type="entry name" value="DNA helicase RuvA subunit, C-terminal domain"/>
    <property type="match status" value="1"/>
</dbReference>
<dbReference type="SUPFAM" id="SSF50249">
    <property type="entry name" value="Nucleic acid-binding proteins"/>
    <property type="match status" value="1"/>
</dbReference>
<dbReference type="SUPFAM" id="SSF47781">
    <property type="entry name" value="RuvA domain 2-like"/>
    <property type="match status" value="1"/>
</dbReference>
<organism>
    <name type="scientific">Trichlorobacter lovleyi (strain ATCC BAA-1151 / DSM 17278 / SZ)</name>
    <name type="common">Geobacter lovleyi</name>
    <dbReference type="NCBI Taxonomy" id="398767"/>
    <lineage>
        <taxon>Bacteria</taxon>
        <taxon>Pseudomonadati</taxon>
        <taxon>Thermodesulfobacteriota</taxon>
        <taxon>Desulfuromonadia</taxon>
        <taxon>Geobacterales</taxon>
        <taxon>Geobacteraceae</taxon>
        <taxon>Trichlorobacter</taxon>
    </lineage>
</organism>